<dbReference type="EMBL" id="CU234118">
    <property type="protein sequence ID" value="CAL76852.1"/>
    <property type="molecule type" value="Genomic_DNA"/>
</dbReference>
<dbReference type="RefSeq" id="WP_011926041.1">
    <property type="nucleotide sequence ID" value="NC_009445.1"/>
</dbReference>
<dbReference type="SMR" id="A4YSH6"/>
<dbReference type="STRING" id="114615.BRADO3049"/>
<dbReference type="KEGG" id="bra:BRADO3049"/>
<dbReference type="eggNOG" id="COG0081">
    <property type="taxonomic scope" value="Bacteria"/>
</dbReference>
<dbReference type="HOGENOM" id="CLU_062853_0_0_5"/>
<dbReference type="OrthoDB" id="9803740at2"/>
<dbReference type="Proteomes" id="UP000001994">
    <property type="component" value="Chromosome"/>
</dbReference>
<dbReference type="GO" id="GO:0022625">
    <property type="term" value="C:cytosolic large ribosomal subunit"/>
    <property type="evidence" value="ECO:0007669"/>
    <property type="project" value="TreeGrafter"/>
</dbReference>
<dbReference type="GO" id="GO:0019843">
    <property type="term" value="F:rRNA binding"/>
    <property type="evidence" value="ECO:0007669"/>
    <property type="project" value="UniProtKB-UniRule"/>
</dbReference>
<dbReference type="GO" id="GO:0003735">
    <property type="term" value="F:structural constituent of ribosome"/>
    <property type="evidence" value="ECO:0007669"/>
    <property type="project" value="InterPro"/>
</dbReference>
<dbReference type="GO" id="GO:0000049">
    <property type="term" value="F:tRNA binding"/>
    <property type="evidence" value="ECO:0007669"/>
    <property type="project" value="UniProtKB-KW"/>
</dbReference>
<dbReference type="GO" id="GO:0006417">
    <property type="term" value="P:regulation of translation"/>
    <property type="evidence" value="ECO:0007669"/>
    <property type="project" value="UniProtKB-KW"/>
</dbReference>
<dbReference type="GO" id="GO:0006412">
    <property type="term" value="P:translation"/>
    <property type="evidence" value="ECO:0007669"/>
    <property type="project" value="UniProtKB-UniRule"/>
</dbReference>
<dbReference type="CDD" id="cd00403">
    <property type="entry name" value="Ribosomal_L1"/>
    <property type="match status" value="1"/>
</dbReference>
<dbReference type="FunFam" id="3.40.50.790:FF:000001">
    <property type="entry name" value="50S ribosomal protein L1"/>
    <property type="match status" value="1"/>
</dbReference>
<dbReference type="Gene3D" id="3.30.190.20">
    <property type="match status" value="1"/>
</dbReference>
<dbReference type="Gene3D" id="3.40.50.790">
    <property type="match status" value="1"/>
</dbReference>
<dbReference type="HAMAP" id="MF_01318_B">
    <property type="entry name" value="Ribosomal_uL1_B"/>
    <property type="match status" value="1"/>
</dbReference>
<dbReference type="InterPro" id="IPR005878">
    <property type="entry name" value="Ribosom_uL1_bac-type"/>
</dbReference>
<dbReference type="InterPro" id="IPR002143">
    <property type="entry name" value="Ribosomal_uL1"/>
</dbReference>
<dbReference type="InterPro" id="IPR023674">
    <property type="entry name" value="Ribosomal_uL1-like"/>
</dbReference>
<dbReference type="InterPro" id="IPR028364">
    <property type="entry name" value="Ribosomal_uL1/biogenesis"/>
</dbReference>
<dbReference type="InterPro" id="IPR016095">
    <property type="entry name" value="Ribosomal_uL1_3-a/b-sand"/>
</dbReference>
<dbReference type="InterPro" id="IPR023673">
    <property type="entry name" value="Ribosomal_uL1_CS"/>
</dbReference>
<dbReference type="NCBIfam" id="TIGR01169">
    <property type="entry name" value="rplA_bact"/>
    <property type="match status" value="1"/>
</dbReference>
<dbReference type="PANTHER" id="PTHR36427">
    <property type="entry name" value="54S RIBOSOMAL PROTEIN L1, MITOCHONDRIAL"/>
    <property type="match status" value="1"/>
</dbReference>
<dbReference type="PANTHER" id="PTHR36427:SF3">
    <property type="entry name" value="LARGE RIBOSOMAL SUBUNIT PROTEIN UL1M"/>
    <property type="match status" value="1"/>
</dbReference>
<dbReference type="Pfam" id="PF00687">
    <property type="entry name" value="Ribosomal_L1"/>
    <property type="match status" value="1"/>
</dbReference>
<dbReference type="PIRSF" id="PIRSF002155">
    <property type="entry name" value="Ribosomal_L1"/>
    <property type="match status" value="1"/>
</dbReference>
<dbReference type="SUPFAM" id="SSF56808">
    <property type="entry name" value="Ribosomal protein L1"/>
    <property type="match status" value="1"/>
</dbReference>
<dbReference type="PROSITE" id="PS01199">
    <property type="entry name" value="RIBOSOMAL_L1"/>
    <property type="match status" value="1"/>
</dbReference>
<reference key="1">
    <citation type="journal article" date="2007" name="Science">
        <title>Legumes symbioses: absence of nod genes in photosynthetic bradyrhizobia.</title>
        <authorList>
            <person name="Giraud E."/>
            <person name="Moulin L."/>
            <person name="Vallenet D."/>
            <person name="Barbe V."/>
            <person name="Cytryn E."/>
            <person name="Avarre J.-C."/>
            <person name="Jaubert M."/>
            <person name="Simon D."/>
            <person name="Cartieaux F."/>
            <person name="Prin Y."/>
            <person name="Bena G."/>
            <person name="Hannibal L."/>
            <person name="Fardoux J."/>
            <person name="Kojadinovic M."/>
            <person name="Vuillet L."/>
            <person name="Lajus A."/>
            <person name="Cruveiller S."/>
            <person name="Rouy Z."/>
            <person name="Mangenot S."/>
            <person name="Segurens B."/>
            <person name="Dossat C."/>
            <person name="Franck W.L."/>
            <person name="Chang W.-S."/>
            <person name="Saunders E."/>
            <person name="Bruce D."/>
            <person name="Richardson P."/>
            <person name="Normand P."/>
            <person name="Dreyfus B."/>
            <person name="Pignol D."/>
            <person name="Stacey G."/>
            <person name="Emerich D."/>
            <person name="Vermeglio A."/>
            <person name="Medigue C."/>
            <person name="Sadowsky M."/>
        </authorList>
    </citation>
    <scope>NUCLEOTIDE SEQUENCE [LARGE SCALE GENOMIC DNA]</scope>
    <source>
        <strain>ORS 278</strain>
    </source>
</reference>
<sequence length="230" mass="24078">MALGKRLKKAREGVDRTKLYPLADAIKMIKERATSKFDETIEVAINLGVDPRHADQMVRGVVMLPNGTGRTLRVGVFARGAKAEEAKAAGADVVGAEDLVEKVQNGNIDFDRCIATPDMMPLVGRLGKVLGPRGMMPNPKIGTVTMDVTGAVKGAKGGSVEFRVEKAGIIQAGVGKASFTEDKLVENIKALADAVVKAKPAGAKGTYVQRVAVSSTMGPGVKVEPGTVLA</sequence>
<organism>
    <name type="scientific">Bradyrhizobium sp. (strain ORS 278)</name>
    <dbReference type="NCBI Taxonomy" id="114615"/>
    <lineage>
        <taxon>Bacteria</taxon>
        <taxon>Pseudomonadati</taxon>
        <taxon>Pseudomonadota</taxon>
        <taxon>Alphaproteobacteria</taxon>
        <taxon>Hyphomicrobiales</taxon>
        <taxon>Nitrobacteraceae</taxon>
        <taxon>Bradyrhizobium</taxon>
    </lineage>
</organism>
<comment type="function">
    <text evidence="1">Binds directly to 23S rRNA. The L1 stalk is quite mobile in the ribosome, and is involved in E site tRNA release.</text>
</comment>
<comment type="function">
    <text evidence="1">Protein L1 is also a translational repressor protein, it controls the translation of the L11 operon by binding to its mRNA.</text>
</comment>
<comment type="subunit">
    <text evidence="1">Part of the 50S ribosomal subunit.</text>
</comment>
<comment type="similarity">
    <text evidence="1">Belongs to the universal ribosomal protein uL1 family.</text>
</comment>
<accession>A4YSH6</accession>
<gene>
    <name evidence="1" type="primary">rplA</name>
    <name type="ordered locus">BRADO3049</name>
</gene>
<keyword id="KW-1185">Reference proteome</keyword>
<keyword id="KW-0678">Repressor</keyword>
<keyword id="KW-0687">Ribonucleoprotein</keyword>
<keyword id="KW-0689">Ribosomal protein</keyword>
<keyword id="KW-0694">RNA-binding</keyword>
<keyword id="KW-0699">rRNA-binding</keyword>
<keyword id="KW-0810">Translation regulation</keyword>
<keyword id="KW-0820">tRNA-binding</keyword>
<evidence type="ECO:0000255" key="1">
    <source>
        <dbReference type="HAMAP-Rule" id="MF_01318"/>
    </source>
</evidence>
<evidence type="ECO:0000305" key="2"/>
<proteinExistence type="inferred from homology"/>
<feature type="chain" id="PRO_0000307968" description="Large ribosomal subunit protein uL1">
    <location>
        <begin position="1"/>
        <end position="230"/>
    </location>
</feature>
<protein>
    <recommendedName>
        <fullName evidence="1">Large ribosomal subunit protein uL1</fullName>
    </recommendedName>
    <alternativeName>
        <fullName evidence="2">50S ribosomal protein L1</fullName>
    </alternativeName>
</protein>
<name>RL1_BRASO</name>